<proteinExistence type="evidence at transcript level"/>
<accession>Q58L93</accession>
<protein>
    <recommendedName>
        <fullName>Venom prothrombin activator porpharin-D</fullName>
        <shortName>vPA</shortName>
        <ecNumber>3.4.21.6</ecNumber>
    </recommendedName>
    <alternativeName>
        <fullName>Venom coagulation factor Xa-like protease</fullName>
    </alternativeName>
    <component>
        <recommendedName>
            <fullName>Porpharin-D light chain</fullName>
        </recommendedName>
    </component>
    <component>
        <recommendedName>
            <fullName>Porpharin-D heavy chain</fullName>
        </recommendedName>
    </component>
</protein>
<evidence type="ECO:0000250" key="1"/>
<evidence type="ECO:0000255" key="2"/>
<evidence type="ECO:0000255" key="3">
    <source>
        <dbReference type="PROSITE-ProRule" id="PRU00076"/>
    </source>
</evidence>
<evidence type="ECO:0000255" key="4">
    <source>
        <dbReference type="PROSITE-ProRule" id="PRU00274"/>
    </source>
</evidence>
<evidence type="ECO:0000255" key="5">
    <source>
        <dbReference type="PROSITE-ProRule" id="PRU00463"/>
    </source>
</evidence>
<keyword id="KW-1204">Blood coagulation cascade activating toxin</keyword>
<keyword id="KW-0106">Calcium</keyword>
<keyword id="KW-0165">Cleavage on pair of basic residues</keyword>
<keyword id="KW-1015">Disulfide bond</keyword>
<keyword id="KW-0245">EGF-like domain</keyword>
<keyword id="KW-0301">Gamma-carboxyglutamic acid</keyword>
<keyword id="KW-0325">Glycoprotein</keyword>
<keyword id="KW-1199">Hemostasis impairing toxin</keyword>
<keyword id="KW-0378">Hydrolase</keyword>
<keyword id="KW-0645">Protease</keyword>
<keyword id="KW-0655">Prothrombin activator</keyword>
<keyword id="KW-0677">Repeat</keyword>
<keyword id="KW-0964">Secreted</keyword>
<keyword id="KW-0720">Serine protease</keyword>
<keyword id="KW-0732">Signal</keyword>
<keyword id="KW-0800">Toxin</keyword>
<dbReference type="EC" id="3.4.21.6"/>
<dbReference type="EMBL" id="AY940207">
    <property type="protein sequence ID" value="AAX37263.1"/>
    <property type="molecule type" value="mRNA"/>
</dbReference>
<dbReference type="SMR" id="Q58L93"/>
<dbReference type="MEROPS" id="S01.396"/>
<dbReference type="GO" id="GO:0005576">
    <property type="term" value="C:extracellular region"/>
    <property type="evidence" value="ECO:0000250"/>
    <property type="project" value="UniProtKB"/>
</dbReference>
<dbReference type="GO" id="GO:0005615">
    <property type="term" value="C:extracellular space"/>
    <property type="evidence" value="ECO:0007669"/>
    <property type="project" value="TreeGrafter"/>
</dbReference>
<dbReference type="GO" id="GO:0005509">
    <property type="term" value="F:calcium ion binding"/>
    <property type="evidence" value="ECO:0007669"/>
    <property type="project" value="InterPro"/>
</dbReference>
<dbReference type="GO" id="GO:0016504">
    <property type="term" value="F:peptidase activator activity"/>
    <property type="evidence" value="ECO:0007669"/>
    <property type="project" value="UniProtKB-KW"/>
</dbReference>
<dbReference type="GO" id="GO:0004252">
    <property type="term" value="F:serine-type endopeptidase activity"/>
    <property type="evidence" value="ECO:0000250"/>
    <property type="project" value="UniProtKB"/>
</dbReference>
<dbReference type="GO" id="GO:0090729">
    <property type="term" value="F:toxin activity"/>
    <property type="evidence" value="ECO:0007669"/>
    <property type="project" value="UniProtKB-KW"/>
</dbReference>
<dbReference type="GO" id="GO:0007596">
    <property type="term" value="P:blood coagulation"/>
    <property type="evidence" value="ECO:0007669"/>
    <property type="project" value="InterPro"/>
</dbReference>
<dbReference type="GO" id="GO:0035807">
    <property type="term" value="P:induction of blood coagulation in another organism"/>
    <property type="evidence" value="ECO:0007669"/>
    <property type="project" value="UniProtKB-ARBA"/>
</dbReference>
<dbReference type="GO" id="GO:0006508">
    <property type="term" value="P:proteolysis"/>
    <property type="evidence" value="ECO:0007669"/>
    <property type="project" value="UniProtKB-KW"/>
</dbReference>
<dbReference type="GO" id="GO:0044469">
    <property type="term" value="P:venom-mediated blood coagulation"/>
    <property type="evidence" value="ECO:0000250"/>
    <property type="project" value="UniProtKB"/>
</dbReference>
<dbReference type="CDD" id="cd00054">
    <property type="entry name" value="EGF_CA"/>
    <property type="match status" value="1"/>
</dbReference>
<dbReference type="CDD" id="cd00190">
    <property type="entry name" value="Tryp_SPc"/>
    <property type="match status" value="1"/>
</dbReference>
<dbReference type="FunFam" id="2.10.25.10:FF:000513">
    <property type="entry name" value="Coagulation factor VII"/>
    <property type="match status" value="1"/>
</dbReference>
<dbReference type="FunFam" id="2.40.10.10:FF:000013">
    <property type="entry name" value="Coagulation factor X"/>
    <property type="match status" value="1"/>
</dbReference>
<dbReference type="FunFam" id="2.10.25.10:FF:000162">
    <property type="entry name" value="Coagulation factor X (Predicted)"/>
    <property type="match status" value="1"/>
</dbReference>
<dbReference type="FunFam" id="4.10.740.10:FF:000001">
    <property type="entry name" value="vitamin K-dependent protein S"/>
    <property type="match status" value="1"/>
</dbReference>
<dbReference type="Gene3D" id="4.10.740.10">
    <property type="entry name" value="Coagulation Factor IX"/>
    <property type="match status" value="1"/>
</dbReference>
<dbReference type="Gene3D" id="2.10.25.10">
    <property type="entry name" value="Laminin"/>
    <property type="match status" value="2"/>
</dbReference>
<dbReference type="Gene3D" id="2.40.10.10">
    <property type="entry name" value="Trypsin-like serine proteases"/>
    <property type="match status" value="2"/>
</dbReference>
<dbReference type="InterPro" id="IPR017857">
    <property type="entry name" value="Coagulation_fac-like_Gla_dom"/>
</dbReference>
<dbReference type="InterPro" id="IPR001881">
    <property type="entry name" value="EGF-like_Ca-bd_dom"/>
</dbReference>
<dbReference type="InterPro" id="IPR000742">
    <property type="entry name" value="EGF-like_dom"/>
</dbReference>
<dbReference type="InterPro" id="IPR000152">
    <property type="entry name" value="EGF-type_Asp/Asn_hydroxyl_site"/>
</dbReference>
<dbReference type="InterPro" id="IPR018097">
    <property type="entry name" value="EGF_Ca-bd_CS"/>
</dbReference>
<dbReference type="InterPro" id="IPR035972">
    <property type="entry name" value="GLA-like_dom_SF"/>
</dbReference>
<dbReference type="InterPro" id="IPR000294">
    <property type="entry name" value="GLA_domain"/>
</dbReference>
<dbReference type="InterPro" id="IPR009030">
    <property type="entry name" value="Growth_fac_rcpt_cys_sf"/>
</dbReference>
<dbReference type="InterPro" id="IPR012224">
    <property type="entry name" value="Pept_S1A_FX"/>
</dbReference>
<dbReference type="InterPro" id="IPR050442">
    <property type="entry name" value="Peptidase_S1_coag_factors"/>
</dbReference>
<dbReference type="InterPro" id="IPR009003">
    <property type="entry name" value="Peptidase_S1_PA"/>
</dbReference>
<dbReference type="InterPro" id="IPR043504">
    <property type="entry name" value="Peptidase_S1_PA_chymotrypsin"/>
</dbReference>
<dbReference type="InterPro" id="IPR001314">
    <property type="entry name" value="Peptidase_S1A"/>
</dbReference>
<dbReference type="InterPro" id="IPR001254">
    <property type="entry name" value="Trypsin_dom"/>
</dbReference>
<dbReference type="InterPro" id="IPR018114">
    <property type="entry name" value="TRYPSIN_HIS"/>
</dbReference>
<dbReference type="InterPro" id="IPR033116">
    <property type="entry name" value="TRYPSIN_SER"/>
</dbReference>
<dbReference type="PANTHER" id="PTHR24278">
    <property type="entry name" value="COAGULATION FACTOR"/>
    <property type="match status" value="1"/>
</dbReference>
<dbReference type="PANTHER" id="PTHR24278:SF28">
    <property type="entry name" value="COAGULATION FACTOR X"/>
    <property type="match status" value="1"/>
</dbReference>
<dbReference type="Pfam" id="PF00008">
    <property type="entry name" value="EGF"/>
    <property type="match status" value="1"/>
</dbReference>
<dbReference type="Pfam" id="PF14670">
    <property type="entry name" value="FXa_inhibition"/>
    <property type="match status" value="1"/>
</dbReference>
<dbReference type="Pfam" id="PF00594">
    <property type="entry name" value="Gla"/>
    <property type="match status" value="1"/>
</dbReference>
<dbReference type="Pfam" id="PF00089">
    <property type="entry name" value="Trypsin"/>
    <property type="match status" value="1"/>
</dbReference>
<dbReference type="PIRSF" id="PIRSF001143">
    <property type="entry name" value="Factor_X"/>
    <property type="match status" value="1"/>
</dbReference>
<dbReference type="PRINTS" id="PR00722">
    <property type="entry name" value="CHYMOTRYPSIN"/>
</dbReference>
<dbReference type="PRINTS" id="PR00010">
    <property type="entry name" value="EGFBLOOD"/>
</dbReference>
<dbReference type="PRINTS" id="PR00001">
    <property type="entry name" value="GLABLOOD"/>
</dbReference>
<dbReference type="SMART" id="SM00181">
    <property type="entry name" value="EGF"/>
    <property type="match status" value="2"/>
</dbReference>
<dbReference type="SMART" id="SM00179">
    <property type="entry name" value="EGF_CA"/>
    <property type="match status" value="1"/>
</dbReference>
<dbReference type="SMART" id="SM00069">
    <property type="entry name" value="GLA"/>
    <property type="match status" value="1"/>
</dbReference>
<dbReference type="SMART" id="SM00020">
    <property type="entry name" value="Tryp_SPc"/>
    <property type="match status" value="1"/>
</dbReference>
<dbReference type="SUPFAM" id="SSF57630">
    <property type="entry name" value="GLA-domain"/>
    <property type="match status" value="1"/>
</dbReference>
<dbReference type="SUPFAM" id="SSF57184">
    <property type="entry name" value="Growth factor receptor domain"/>
    <property type="match status" value="1"/>
</dbReference>
<dbReference type="SUPFAM" id="SSF50494">
    <property type="entry name" value="Trypsin-like serine proteases"/>
    <property type="match status" value="1"/>
</dbReference>
<dbReference type="PROSITE" id="PS00010">
    <property type="entry name" value="ASX_HYDROXYL"/>
    <property type="match status" value="1"/>
</dbReference>
<dbReference type="PROSITE" id="PS00022">
    <property type="entry name" value="EGF_1"/>
    <property type="match status" value="1"/>
</dbReference>
<dbReference type="PROSITE" id="PS50026">
    <property type="entry name" value="EGF_3"/>
    <property type="match status" value="1"/>
</dbReference>
<dbReference type="PROSITE" id="PS01187">
    <property type="entry name" value="EGF_CA"/>
    <property type="match status" value="1"/>
</dbReference>
<dbReference type="PROSITE" id="PS00011">
    <property type="entry name" value="GLA_1"/>
    <property type="match status" value="1"/>
</dbReference>
<dbReference type="PROSITE" id="PS50998">
    <property type="entry name" value="GLA_2"/>
    <property type="match status" value="1"/>
</dbReference>
<dbReference type="PROSITE" id="PS50240">
    <property type="entry name" value="TRYPSIN_DOM"/>
    <property type="match status" value="1"/>
</dbReference>
<dbReference type="PROSITE" id="PS00134">
    <property type="entry name" value="TRYPSIN_HIS"/>
    <property type="match status" value="1"/>
</dbReference>
<dbReference type="PROSITE" id="PS00135">
    <property type="entry name" value="TRYPSIN_SER"/>
    <property type="match status" value="1"/>
</dbReference>
<name>FAXD_PSEPO</name>
<feature type="signal peptide" evidence="2">
    <location>
        <begin position="1"/>
        <end position="20"/>
    </location>
</feature>
<feature type="propeptide" id="PRO_0000409900" evidence="1">
    <location>
        <begin position="21"/>
        <end position="40"/>
    </location>
</feature>
<feature type="chain" id="PRO_5000095356" description="Porpharin-D light chain">
    <location>
        <begin position="41"/>
        <end position="181"/>
    </location>
</feature>
<feature type="propeptide" id="PRO_5000095357" description="Activation peptide" evidence="1">
    <location>
        <begin position="182"/>
        <end position="209"/>
    </location>
</feature>
<feature type="chain" id="PRO_5000095358" description="Porpharin-D heavy chain">
    <location>
        <begin position="210"/>
        <end position="454"/>
    </location>
</feature>
<feature type="domain" description="Gla" evidence="5">
    <location>
        <begin position="41"/>
        <end position="86"/>
    </location>
</feature>
<feature type="domain" description="EGF-like 1; calcium-binding" evidence="3">
    <location>
        <begin position="86"/>
        <end position="122"/>
    </location>
</feature>
<feature type="domain" description="EGF-like 2" evidence="3">
    <location>
        <begin position="129"/>
        <end position="164"/>
    </location>
</feature>
<feature type="domain" description="Peptidase S1" evidence="4">
    <location>
        <begin position="210"/>
        <end position="441"/>
    </location>
</feature>
<feature type="active site" description="Charge relay system" evidence="1">
    <location>
        <position position="251"/>
    </location>
</feature>
<feature type="active site" description="Charge relay system" evidence="1">
    <location>
        <position position="296"/>
    </location>
</feature>
<feature type="active site" description="Charge relay system" evidence="1">
    <location>
        <position position="393"/>
    </location>
</feature>
<feature type="modified residue" description="4-carboxyglutamate" evidence="5">
    <location>
        <position position="46"/>
    </location>
</feature>
<feature type="modified residue" description="4-carboxyglutamate" evidence="5">
    <location>
        <position position="47"/>
    </location>
</feature>
<feature type="modified residue" description="4-carboxyglutamate" evidence="5">
    <location>
        <position position="54"/>
    </location>
</feature>
<feature type="modified residue" description="4-carboxyglutamate" evidence="5">
    <location>
        <position position="56"/>
    </location>
</feature>
<feature type="modified residue" description="4-carboxyglutamate" evidence="5">
    <location>
        <position position="59"/>
    </location>
</feature>
<feature type="modified residue" description="4-carboxyglutamate" evidence="5">
    <location>
        <position position="60"/>
    </location>
</feature>
<feature type="modified residue" description="4-carboxyglutamate" evidence="5">
    <location>
        <position position="65"/>
    </location>
</feature>
<feature type="modified residue" description="4-carboxyglutamate" evidence="5">
    <location>
        <position position="66"/>
    </location>
</feature>
<feature type="modified residue" description="4-carboxyglutamate" evidence="5">
    <location>
        <position position="69"/>
    </location>
</feature>
<feature type="modified residue" description="4-carboxyglutamate" evidence="5">
    <location>
        <position position="75"/>
    </location>
</feature>
<feature type="glycosylation site" description="O-linked (Hex...) serine" evidence="1">
    <location>
        <position position="92"/>
    </location>
</feature>
<feature type="disulfide bond" evidence="1">
    <location>
        <begin position="57"/>
        <end position="62"/>
    </location>
</feature>
<feature type="disulfide bond" evidence="1">
    <location>
        <begin position="90"/>
        <end position="101"/>
    </location>
</feature>
<feature type="disulfide bond" evidence="1">
    <location>
        <begin position="95"/>
        <end position="110"/>
    </location>
</feature>
<feature type="disulfide bond" evidence="1">
    <location>
        <begin position="112"/>
        <end position="121"/>
    </location>
</feature>
<feature type="disulfide bond" evidence="1">
    <location>
        <begin position="129"/>
        <end position="140"/>
    </location>
</feature>
<feature type="disulfide bond" evidence="1">
    <location>
        <begin position="136"/>
        <end position="149"/>
    </location>
</feature>
<feature type="disulfide bond" evidence="1">
    <location>
        <begin position="151"/>
        <end position="164"/>
    </location>
</feature>
<feature type="disulfide bond" description="Interchain (between light and heavy chains)" evidence="3 4 5">
    <location>
        <begin position="172"/>
        <end position="316"/>
    </location>
</feature>
<feature type="disulfide bond" evidence="1">
    <location>
        <begin position="216"/>
        <end position="221"/>
    </location>
</feature>
<feature type="disulfide bond" evidence="1">
    <location>
        <begin position="236"/>
        <end position="252"/>
    </location>
</feature>
<feature type="disulfide bond" evidence="1">
    <location>
        <begin position="364"/>
        <end position="378"/>
    </location>
</feature>
<feature type="disulfide bond" evidence="1">
    <location>
        <begin position="389"/>
        <end position="417"/>
    </location>
</feature>
<comment type="function">
    <text evidence="1">Snake prothrombin activator that attacks the hemostatic system of prey. This protein is functionally similar to blood coagulation factor Xa (By similarity).</text>
</comment>
<comment type="catalytic activity">
    <reaction>
        <text>Selective cleavage of Arg-|-Thr and then Arg-|-Ile bonds in prothrombin to form thrombin.</text>
        <dbReference type="EC" id="3.4.21.6"/>
    </reaction>
</comment>
<comment type="subunit">
    <text evidence="1">Heterodimer of a light chain and a heavy chain; disulfide-linked.</text>
</comment>
<comment type="subcellular location">
    <subcellularLocation>
        <location evidence="1">Secreted</location>
    </subcellularLocation>
</comment>
<comment type="tissue specificity">
    <text>Expressed by the venom gland.</text>
</comment>
<comment type="PTM">
    <text evidence="1">The vitamin K-dependent, enzymatic carboxylation of some glutamate residues allows the modified protein to bind calcium.</text>
</comment>
<comment type="miscellaneous">
    <text>Is classified in the group D of snake venom prothrombin activators, since it requires the mammalian factor Va for maximal activity for the cleavage of prothrombin.</text>
</comment>
<comment type="miscellaneous">
    <text>In contrast to blood coagulation factors that circulate as inactive zymogen in plasma, venom prothrombin activators are always found in the active form in the venom.</text>
</comment>
<comment type="similarity">
    <text evidence="4">Belongs to the peptidase S1 family. Snake venom subfamily.</text>
</comment>
<organism>
    <name type="scientific">Pseudechis porphyriacus</name>
    <name type="common">Red-bellied black snake</name>
    <dbReference type="NCBI Taxonomy" id="8671"/>
    <lineage>
        <taxon>Eukaryota</taxon>
        <taxon>Metazoa</taxon>
        <taxon>Chordata</taxon>
        <taxon>Craniata</taxon>
        <taxon>Vertebrata</taxon>
        <taxon>Euteleostomi</taxon>
        <taxon>Lepidosauria</taxon>
        <taxon>Squamata</taxon>
        <taxon>Bifurcata</taxon>
        <taxon>Unidentata</taxon>
        <taxon>Episquamata</taxon>
        <taxon>Toxicofera</taxon>
        <taxon>Serpentes</taxon>
        <taxon>Colubroidea</taxon>
        <taxon>Elapidae</taxon>
        <taxon>Hydrophiinae</taxon>
        <taxon>Pseudechis</taxon>
    </lineage>
</organism>
<sequence>MAPQLLLCLILTFLWSLPEAESNVFLKSKEANRFLQRTKRSNSLFEEFRPGNIERECIEEKCSKEEAREIFKDNEKTEAFWNVYVDGDQCSSNPCHYGGTCKDGIGSYTCTCLPNYEGKNCEHLLFKSCRFFNGNCWHFCKPVQNDTQCSCAESYRLGDDGHSCVAEGDFSCGRNIKARNKREASLPDFVQSQNATLLKKSDNPSPDIRIINGMDCKLGECPWQAVLLDKEGDVFCGGTILSPIYVLTAAHCITQSKHISVVVGEIDISRKETRHLLSVDKAYVHTKFVLATYDYDIAIIQLKTPIQFSENVVPACLPTADFANQVLMKQDFGIISGFGHTRSGGQTSNTLKVVTIPYVDRHTCMLSSDFRITPNMFCAGYDTLPRDACQGDSGGPHITAYRDTHFITGIISWGEGCAKKGKYGVYTKVSNFIPWIKAVMRKHQPSTESSTGRL</sequence>
<reference key="1">
    <citation type="journal article" date="2005" name="Mol. Biol. Evol.">
        <title>Comparative analysis of prothrombin activators from the venom of Australian elapids.</title>
        <authorList>
            <person name="St Pierre L."/>
            <person name="Masci P.P."/>
            <person name="Filippovich I."/>
            <person name="Sorokina N."/>
            <person name="Marsh N."/>
            <person name="Miller D.J."/>
            <person name="Lavin M.F."/>
        </authorList>
    </citation>
    <scope>NUCLEOTIDE SEQUENCE [MRNA]</scope>
    <source>
        <tissue>Venom gland</tissue>
    </source>
</reference>
<reference key="2">
    <citation type="journal article" date="2001" name="Thromb. Haemost.">
        <title>Classification and nomenclature of prothrombin activators isolated from snake venoms.</title>
        <authorList>
            <person name="Manjunatha Kini R."/>
            <person name="Morita T."/>
            <person name="Rosing J."/>
        </authorList>
    </citation>
    <scope>NOMENCLATURE</scope>
</reference>